<reference key="1">
    <citation type="journal article" date="2006" name="J. Bacteriol.">
        <title>Complete genome sequence of Yersinia pestis strains Antiqua and Nepal516: evidence of gene reduction in an emerging pathogen.</title>
        <authorList>
            <person name="Chain P.S.G."/>
            <person name="Hu P."/>
            <person name="Malfatti S.A."/>
            <person name="Radnedge L."/>
            <person name="Larimer F."/>
            <person name="Vergez L.M."/>
            <person name="Worsham P."/>
            <person name="Chu M.C."/>
            <person name="Andersen G.L."/>
        </authorList>
    </citation>
    <scope>NUCLEOTIDE SEQUENCE [LARGE SCALE GENOMIC DNA]</scope>
    <source>
        <strain>Nepal516</strain>
    </source>
</reference>
<reference key="2">
    <citation type="submission" date="2009-04" db="EMBL/GenBank/DDBJ databases">
        <title>Yersinia pestis Nepal516A whole genome shotgun sequencing project.</title>
        <authorList>
            <person name="Plunkett G. III"/>
            <person name="Anderson B.D."/>
            <person name="Baumler D.J."/>
            <person name="Burland V."/>
            <person name="Cabot E.L."/>
            <person name="Glasner J.D."/>
            <person name="Mau B."/>
            <person name="Neeno-Eckwall E."/>
            <person name="Perna N.T."/>
            <person name="Munk A.C."/>
            <person name="Tapia R."/>
            <person name="Green L.D."/>
            <person name="Rogers Y.C."/>
            <person name="Detter J.C."/>
            <person name="Bruce D.C."/>
            <person name="Brettin T.S."/>
        </authorList>
    </citation>
    <scope>NUCLEOTIDE SEQUENCE [LARGE SCALE GENOMIC DNA]</scope>
    <source>
        <strain>Nepal516</strain>
    </source>
</reference>
<feature type="chain" id="PRO_1000024333" description="Cation-efflux pump FieF">
    <location>
        <begin position="1"/>
        <end position="300"/>
    </location>
</feature>
<feature type="transmembrane region" description="Helical" evidence="1">
    <location>
        <begin position="12"/>
        <end position="32"/>
    </location>
</feature>
<feature type="transmembrane region" description="Helical" evidence="1">
    <location>
        <begin position="40"/>
        <end position="60"/>
    </location>
</feature>
<feature type="transmembrane region" description="Helical" evidence="1">
    <location>
        <begin position="82"/>
        <end position="102"/>
    </location>
</feature>
<feature type="transmembrane region" description="Helical" evidence="1">
    <location>
        <begin position="114"/>
        <end position="134"/>
    </location>
</feature>
<feature type="transmembrane region" description="Helical" evidence="1">
    <location>
        <begin position="155"/>
        <end position="175"/>
    </location>
</feature>
<feature type="transmembrane region" description="Helical" evidence="1">
    <location>
        <begin position="178"/>
        <end position="198"/>
    </location>
</feature>
<feature type="binding site" evidence="1">
    <location>
        <position position="45"/>
    </location>
    <ligand>
        <name>Zn(2+)</name>
        <dbReference type="ChEBI" id="CHEBI:29105"/>
    </ligand>
</feature>
<feature type="binding site" evidence="1">
    <location>
        <position position="49"/>
    </location>
    <ligand>
        <name>Zn(2+)</name>
        <dbReference type="ChEBI" id="CHEBI:29105"/>
    </ligand>
</feature>
<feature type="binding site" evidence="1">
    <location>
        <position position="153"/>
    </location>
    <ligand>
        <name>Zn(2+)</name>
        <dbReference type="ChEBI" id="CHEBI:29105"/>
    </ligand>
</feature>
<feature type="binding site" evidence="1">
    <location>
        <position position="157"/>
    </location>
    <ligand>
        <name>Zn(2+)</name>
        <dbReference type="ChEBI" id="CHEBI:29105"/>
    </ligand>
</feature>
<gene>
    <name evidence="1" type="primary">fieF</name>
    <name type="ordered locus">YPN_3771</name>
    <name type="ORF">YP516_4291</name>
</gene>
<proteinExistence type="inferred from homology"/>
<protein>
    <recommendedName>
        <fullName evidence="1">Cation-efflux pump FieF</fullName>
    </recommendedName>
</protein>
<name>FIEF_YERPN</name>
<organism>
    <name type="scientific">Yersinia pestis bv. Antiqua (strain Nepal516)</name>
    <dbReference type="NCBI Taxonomy" id="377628"/>
    <lineage>
        <taxon>Bacteria</taxon>
        <taxon>Pseudomonadati</taxon>
        <taxon>Pseudomonadota</taxon>
        <taxon>Gammaproteobacteria</taxon>
        <taxon>Enterobacterales</taxon>
        <taxon>Yersiniaceae</taxon>
        <taxon>Yersinia</taxon>
    </lineage>
</organism>
<dbReference type="EMBL" id="CP000305">
    <property type="protein sequence ID" value="ABG20098.1"/>
    <property type="molecule type" value="Genomic_DNA"/>
</dbReference>
<dbReference type="EMBL" id="ACNQ01000019">
    <property type="protein sequence ID" value="EEO74684.1"/>
    <property type="molecule type" value="Genomic_DNA"/>
</dbReference>
<dbReference type="RefSeq" id="WP_002208967.1">
    <property type="nucleotide sequence ID" value="NZ_ACNQ01000019.1"/>
</dbReference>
<dbReference type="SMR" id="Q1CD32"/>
<dbReference type="GeneID" id="57974515"/>
<dbReference type="KEGG" id="ypn:YPN_3771"/>
<dbReference type="HOGENOM" id="CLU_013430_3_0_6"/>
<dbReference type="Proteomes" id="UP000008936">
    <property type="component" value="Chromosome"/>
</dbReference>
<dbReference type="GO" id="GO:0005886">
    <property type="term" value="C:plasma membrane"/>
    <property type="evidence" value="ECO:0007669"/>
    <property type="project" value="UniProtKB-SubCell"/>
</dbReference>
<dbReference type="GO" id="GO:0015086">
    <property type="term" value="F:cadmium ion transmembrane transporter activity"/>
    <property type="evidence" value="ECO:0007669"/>
    <property type="project" value="UniProtKB-UniRule"/>
</dbReference>
<dbReference type="GO" id="GO:0015093">
    <property type="term" value="F:ferrous iron transmembrane transporter activity"/>
    <property type="evidence" value="ECO:0007669"/>
    <property type="project" value="TreeGrafter"/>
</dbReference>
<dbReference type="GO" id="GO:0046872">
    <property type="term" value="F:metal ion binding"/>
    <property type="evidence" value="ECO:0007669"/>
    <property type="project" value="UniProtKB-KW"/>
</dbReference>
<dbReference type="GO" id="GO:0015341">
    <property type="term" value="F:zinc efflux antiporter activity"/>
    <property type="evidence" value="ECO:0007669"/>
    <property type="project" value="TreeGrafter"/>
</dbReference>
<dbReference type="GO" id="GO:0006882">
    <property type="term" value="P:intracellular zinc ion homeostasis"/>
    <property type="evidence" value="ECO:0007669"/>
    <property type="project" value="TreeGrafter"/>
</dbReference>
<dbReference type="FunFam" id="1.20.1510.10:FF:000001">
    <property type="entry name" value="Ferrous-iron efflux pump FieF"/>
    <property type="match status" value="1"/>
</dbReference>
<dbReference type="FunFam" id="3.30.70.1350:FF:000002">
    <property type="entry name" value="Ferrous-iron efflux pump FieF"/>
    <property type="match status" value="1"/>
</dbReference>
<dbReference type="Gene3D" id="1.20.1510.10">
    <property type="entry name" value="Cation efflux protein transmembrane domain"/>
    <property type="match status" value="1"/>
</dbReference>
<dbReference type="Gene3D" id="3.30.70.1350">
    <property type="entry name" value="Cation efflux protein, cytoplasmic domain"/>
    <property type="match status" value="1"/>
</dbReference>
<dbReference type="HAMAP" id="MF_01425">
    <property type="entry name" value="Cation_efflux_FieF"/>
    <property type="match status" value="1"/>
</dbReference>
<dbReference type="InterPro" id="IPR002524">
    <property type="entry name" value="Cation_efflux"/>
</dbReference>
<dbReference type="InterPro" id="IPR027470">
    <property type="entry name" value="Cation_efflux_CTD"/>
</dbReference>
<dbReference type="InterPro" id="IPR036837">
    <property type="entry name" value="Cation_efflux_CTD_sf"/>
</dbReference>
<dbReference type="InterPro" id="IPR023783">
    <property type="entry name" value="Cation_efflux_FieF"/>
</dbReference>
<dbReference type="InterPro" id="IPR027469">
    <property type="entry name" value="Cation_efflux_TMD_sf"/>
</dbReference>
<dbReference type="InterPro" id="IPR050291">
    <property type="entry name" value="CDF_Transporter"/>
</dbReference>
<dbReference type="NCBIfam" id="TIGR01297">
    <property type="entry name" value="CDF"/>
    <property type="match status" value="1"/>
</dbReference>
<dbReference type="NCBIfam" id="NF007064">
    <property type="entry name" value="PRK09509.1"/>
    <property type="match status" value="1"/>
</dbReference>
<dbReference type="PANTHER" id="PTHR43840:SF41">
    <property type="entry name" value="CATION-EFFLUX PUMP FIEF"/>
    <property type="match status" value="1"/>
</dbReference>
<dbReference type="PANTHER" id="PTHR43840">
    <property type="entry name" value="MITOCHONDRIAL METAL TRANSPORTER 1-RELATED"/>
    <property type="match status" value="1"/>
</dbReference>
<dbReference type="Pfam" id="PF01545">
    <property type="entry name" value="Cation_efflux"/>
    <property type="match status" value="1"/>
</dbReference>
<dbReference type="Pfam" id="PF16916">
    <property type="entry name" value="ZT_dimer"/>
    <property type="match status" value="1"/>
</dbReference>
<dbReference type="SUPFAM" id="SSF160240">
    <property type="entry name" value="Cation efflux protein cytoplasmic domain-like"/>
    <property type="match status" value="1"/>
</dbReference>
<dbReference type="SUPFAM" id="SSF161111">
    <property type="entry name" value="Cation efflux protein transmembrane domain-like"/>
    <property type="match status" value="1"/>
</dbReference>
<accession>Q1CD32</accession>
<accession>D1Q2D1</accession>
<sequence>MDPQYARWVKAAALSATALASILLIIKIFAWWHTGSVSLLAALVDSLVDLAASLTNLFVVRYSLQPADEEHTFGHGKAESLAALAQSMFISGSALFLFLTGFRHLASPEPLQDPSIGIGVTLVALFSTLILVTFQRWVVRKTHSQAIRADMLHYQSDVLMNGAILIALALSWYGFRRADALFALGIGVYILYSALRMGYEAVQSLLDRALPDDERQQIIDIVTSWPGVIGAHDLRTRRSGQTRFIQLHLEMEDMMPLMEAHVLAEQVEHALLYRFPGADVLIHQDPCSVVPKERHAHWEL</sequence>
<comment type="function">
    <text evidence="1">Divalent metal cation transporter which exports Zn(2+), Cd(2+) and possibly Fe(2+). May be involved in zinc and iron detoxification by efflux.</text>
</comment>
<comment type="catalytic activity">
    <reaction evidence="1">
        <text>Zn(2+)(in) + H(+)(out) = Zn(2+)(out) + H(+)(in)</text>
        <dbReference type="Rhea" id="RHEA:28839"/>
        <dbReference type="ChEBI" id="CHEBI:15378"/>
        <dbReference type="ChEBI" id="CHEBI:29105"/>
    </reaction>
</comment>
<comment type="catalytic activity">
    <reaction evidence="1">
        <text>Cd(2+)(in) + H(+)(out) = Cd(2+)(out) + H(+)(in)</text>
        <dbReference type="Rhea" id="RHEA:28739"/>
        <dbReference type="ChEBI" id="CHEBI:15378"/>
        <dbReference type="ChEBI" id="CHEBI:48775"/>
    </reaction>
</comment>
<comment type="catalytic activity">
    <reaction evidence="1">
        <text>Fe(2+)(in) + H(+)(out) = Fe(2+)(out) + H(+)(in)</text>
        <dbReference type="Rhea" id="RHEA:29439"/>
        <dbReference type="ChEBI" id="CHEBI:15378"/>
        <dbReference type="ChEBI" id="CHEBI:29033"/>
    </reaction>
</comment>
<comment type="subunit">
    <text evidence="1">Homodimer.</text>
</comment>
<comment type="subcellular location">
    <subcellularLocation>
        <location evidence="1">Cell inner membrane</location>
        <topology evidence="1">Multi-pass membrane protein</topology>
    </subcellularLocation>
</comment>
<comment type="similarity">
    <text evidence="1">Belongs to the cation diffusion facilitator (CDF) transporter (TC 2.A.4) family. FieF subfamily.</text>
</comment>
<keyword id="KW-0997">Cell inner membrane</keyword>
<keyword id="KW-1003">Cell membrane</keyword>
<keyword id="KW-0406">Ion transport</keyword>
<keyword id="KW-0408">Iron</keyword>
<keyword id="KW-0410">Iron transport</keyword>
<keyword id="KW-0472">Membrane</keyword>
<keyword id="KW-0479">Metal-binding</keyword>
<keyword id="KW-0812">Transmembrane</keyword>
<keyword id="KW-1133">Transmembrane helix</keyword>
<keyword id="KW-0813">Transport</keyword>
<keyword id="KW-0862">Zinc</keyword>
<keyword id="KW-0864">Zinc transport</keyword>
<evidence type="ECO:0000255" key="1">
    <source>
        <dbReference type="HAMAP-Rule" id="MF_01425"/>
    </source>
</evidence>